<organism>
    <name type="scientific">Thermotoga petrophila (strain ATCC BAA-488 / DSM 13995 / JCM 10881 / RKU-1)</name>
    <dbReference type="NCBI Taxonomy" id="390874"/>
    <lineage>
        <taxon>Bacteria</taxon>
        <taxon>Thermotogati</taxon>
        <taxon>Thermotogota</taxon>
        <taxon>Thermotogae</taxon>
        <taxon>Thermotogales</taxon>
        <taxon>Thermotogaceae</taxon>
        <taxon>Thermotoga</taxon>
    </lineage>
</organism>
<protein>
    <recommendedName>
        <fullName evidence="1">Flagellar assembly factor FliW</fullName>
    </recommendedName>
</protein>
<feature type="chain" id="PRO_1000065823" description="Flagellar assembly factor FliW">
    <location>
        <begin position="1"/>
        <end position="149"/>
    </location>
</feature>
<evidence type="ECO:0000255" key="1">
    <source>
        <dbReference type="HAMAP-Rule" id="MF_01185"/>
    </source>
</evidence>
<name>FLIW_THEP1</name>
<sequence>MVYKTKLGEMEISDESIFTFEKGIPGFEHLRKFALVFPQETFPIGWLLSLEDPEVGLPVVDPKLVRADYDPVVLSEDLEEIEAENQEALLFFCVLTIPPGKPEKTTINLRAPIILNQKKKKGIQTILENEDYQLRHLLSEEMERSKTVV</sequence>
<gene>
    <name evidence="1" type="primary">fliW</name>
    <name type="ordered locus">Tpet_0843</name>
</gene>
<proteinExistence type="inferred from homology"/>
<keyword id="KW-1005">Bacterial flagellum biogenesis</keyword>
<keyword id="KW-0143">Chaperone</keyword>
<keyword id="KW-0963">Cytoplasm</keyword>
<keyword id="KW-0810">Translation regulation</keyword>
<reference key="1">
    <citation type="submission" date="2007-05" db="EMBL/GenBank/DDBJ databases">
        <title>Complete sequence of Thermotoga petrophila RKU-1.</title>
        <authorList>
            <consortium name="US DOE Joint Genome Institute"/>
            <person name="Copeland A."/>
            <person name="Lucas S."/>
            <person name="Lapidus A."/>
            <person name="Barry K."/>
            <person name="Glavina del Rio T."/>
            <person name="Dalin E."/>
            <person name="Tice H."/>
            <person name="Pitluck S."/>
            <person name="Sims D."/>
            <person name="Brettin T."/>
            <person name="Bruce D."/>
            <person name="Detter J.C."/>
            <person name="Han C."/>
            <person name="Tapia R."/>
            <person name="Schmutz J."/>
            <person name="Larimer F."/>
            <person name="Land M."/>
            <person name="Hauser L."/>
            <person name="Kyrpides N."/>
            <person name="Mikhailova N."/>
            <person name="Nelson K."/>
            <person name="Gogarten J.P."/>
            <person name="Noll K."/>
            <person name="Richardson P."/>
        </authorList>
    </citation>
    <scope>NUCLEOTIDE SEQUENCE [LARGE SCALE GENOMIC DNA]</scope>
    <source>
        <strain>ATCC BAA-488 / DSM 13995 / JCM 10881 / RKU-1</strain>
    </source>
</reference>
<comment type="function">
    <text evidence="1">Acts as an anti-CsrA protein, binds CsrA and prevents it from repressing translation of its target genes, one of which is flagellin. Binds to flagellin and participates in the assembly of the flagellum.</text>
</comment>
<comment type="subunit">
    <text evidence="1">Interacts with translational regulator CsrA and flagellin(s).</text>
</comment>
<comment type="subcellular location">
    <subcellularLocation>
        <location evidence="1">Cytoplasm</location>
    </subcellularLocation>
</comment>
<comment type="similarity">
    <text evidence="1">Belongs to the FliW family.</text>
</comment>
<dbReference type="EMBL" id="CP000702">
    <property type="protein sequence ID" value="ABQ46862.1"/>
    <property type="molecule type" value="Genomic_DNA"/>
</dbReference>
<dbReference type="RefSeq" id="WP_011943429.1">
    <property type="nucleotide sequence ID" value="NC_009486.1"/>
</dbReference>
<dbReference type="SMR" id="A5IKY9"/>
<dbReference type="STRING" id="390874.Tpet_0843"/>
<dbReference type="KEGG" id="tpt:Tpet_0843"/>
<dbReference type="eggNOG" id="COG1699">
    <property type="taxonomic scope" value="Bacteria"/>
</dbReference>
<dbReference type="HOGENOM" id="CLU_112356_0_2_0"/>
<dbReference type="Proteomes" id="UP000006558">
    <property type="component" value="Chromosome"/>
</dbReference>
<dbReference type="GO" id="GO:0005737">
    <property type="term" value="C:cytoplasm"/>
    <property type="evidence" value="ECO:0007669"/>
    <property type="project" value="UniProtKB-SubCell"/>
</dbReference>
<dbReference type="GO" id="GO:0044780">
    <property type="term" value="P:bacterial-type flagellum assembly"/>
    <property type="evidence" value="ECO:0007669"/>
    <property type="project" value="UniProtKB-UniRule"/>
</dbReference>
<dbReference type="GO" id="GO:0006417">
    <property type="term" value="P:regulation of translation"/>
    <property type="evidence" value="ECO:0007669"/>
    <property type="project" value="UniProtKB-KW"/>
</dbReference>
<dbReference type="Gene3D" id="2.30.290.10">
    <property type="entry name" value="BH3618-like"/>
    <property type="match status" value="1"/>
</dbReference>
<dbReference type="HAMAP" id="MF_01185">
    <property type="entry name" value="FliW"/>
    <property type="match status" value="1"/>
</dbReference>
<dbReference type="InterPro" id="IPR003775">
    <property type="entry name" value="Flagellar_assembly_factor_FliW"/>
</dbReference>
<dbReference type="InterPro" id="IPR024046">
    <property type="entry name" value="Flagellar_assmbl_FliW_dom_sf"/>
</dbReference>
<dbReference type="NCBIfam" id="NF009793">
    <property type="entry name" value="PRK13285.1-1"/>
    <property type="match status" value="1"/>
</dbReference>
<dbReference type="PANTHER" id="PTHR39190">
    <property type="entry name" value="FLAGELLAR ASSEMBLY FACTOR FLIW"/>
    <property type="match status" value="1"/>
</dbReference>
<dbReference type="PANTHER" id="PTHR39190:SF1">
    <property type="entry name" value="FLAGELLAR ASSEMBLY FACTOR FLIW"/>
    <property type="match status" value="1"/>
</dbReference>
<dbReference type="Pfam" id="PF02623">
    <property type="entry name" value="FliW"/>
    <property type="match status" value="1"/>
</dbReference>
<dbReference type="SUPFAM" id="SSF141457">
    <property type="entry name" value="BH3618-like"/>
    <property type="match status" value="1"/>
</dbReference>
<accession>A5IKY9</accession>